<proteinExistence type="evidence at transcript level"/>
<feature type="chain" id="PRO_0000417133" description="Floral homeotic protein APETALA 1 A">
    <location>
        <begin position="1"/>
        <end position="256"/>
    </location>
</feature>
<feature type="domain" description="MADS-box" evidence="2">
    <location>
        <begin position="1"/>
        <end position="61"/>
    </location>
</feature>
<feature type="domain" description="K-box" evidence="3">
    <location>
        <begin position="88"/>
        <end position="178"/>
    </location>
</feature>
<feature type="region of interest" description="Disordered" evidence="4">
    <location>
        <begin position="187"/>
        <end position="206"/>
    </location>
</feature>
<comment type="function">
    <text evidence="1">Transcription factor that promotes early floral meristem identity in synergy with LEAFY. Displays a redundant function with CAULIFLOWER in the up-regulation of LEAFY. Required subsequently for the transition of an inflorescence meristem into a floral meristem, and for the normal development of sepals and petals in flowers. Regulates positively B class homeotic proteins (By similarity).</text>
</comment>
<comment type="subunit">
    <text evidence="1">Homodimer capable of binding to CArG-box sequences.</text>
</comment>
<comment type="subcellular location">
    <subcellularLocation>
        <location evidence="2">Nucleus</location>
    </subcellularLocation>
</comment>
<comment type="developmental stage">
    <text evidence="5">Accumulates in floral primordia and is maintained at a maximal level at the floral bud stage of arrest.</text>
</comment>
<comment type="induction">
    <text evidence="5">By cold shock (e.g. from 22/17 to 16/12 degrees Celsius in light/night respectively).</text>
</comment>
<protein>
    <recommendedName>
        <fullName>Floral homeotic protein APETALA 1 A</fullName>
        <shortName>BoAP1-a</shortName>
        <shortName>BobAP1-a</shortName>
    </recommendedName>
    <alternativeName>
        <fullName>Agamous-like MADS-box protein AP1-A</fullName>
    </alternativeName>
</protein>
<reference key="1">
    <citation type="thesis" date="2002" institute="University of Warwick" country="United Kingdom">
        <title>MADS-box genes and the genetics of cauliflower curd development.</title>
        <authorList>
            <person name="Kop E.P."/>
        </authorList>
    </citation>
    <scope>NUCLEOTIDE SEQUENCE [MRNA]</scope>
    <source>
        <strain>cv. CA25</strain>
        <tissue>Flower meristem</tissue>
    </source>
</reference>
<reference key="2">
    <citation type="journal article" date="2008" name="J. Exp. Bot.">
        <title>Meristem identity gene expression during curd proliferation and flower initiation in Brassica oleracea.</title>
        <authorList>
            <person name="Duclos D.V."/>
            <person name="Bjoerkman T."/>
        </authorList>
    </citation>
    <scope>DEVELOPMENTAL STAGE</scope>
    <scope>INDUCTION BY COLD SHOCK</scope>
</reference>
<sequence>MGRGRVQLKRIENKINRQVTFSKRRAGLMKKAHEISVLCDAEVALVVFSHKGKLFEYSTDSCMEKILERYERYSYAERQLIAPESDSNTNWSMEYNRLKAKIELLERNQRHYLGEDLQAMSPKELQNLEQQLDTALKHIRSRKNQLMYDSINELQRKEKAIQEQNSMLSKQIKERENVLRAQQEQWDEQNHGHNMPPPPPPQQHQIQHPYMLSHQPSPFLNMGGLYQEEDQMAMRRNDLDLSLEPVYNCNLGCFAA</sequence>
<dbReference type="EMBL" id="AJ505845">
    <property type="protein sequence ID" value="CAD47853.1"/>
    <property type="molecule type" value="mRNA"/>
</dbReference>
<dbReference type="SMR" id="Q8GTF5"/>
<dbReference type="GO" id="GO:0005634">
    <property type="term" value="C:nucleus"/>
    <property type="evidence" value="ECO:0007669"/>
    <property type="project" value="UniProtKB-SubCell"/>
</dbReference>
<dbReference type="GO" id="GO:0003700">
    <property type="term" value="F:DNA-binding transcription factor activity"/>
    <property type="evidence" value="ECO:0007669"/>
    <property type="project" value="InterPro"/>
</dbReference>
<dbReference type="GO" id="GO:0046983">
    <property type="term" value="F:protein dimerization activity"/>
    <property type="evidence" value="ECO:0007669"/>
    <property type="project" value="InterPro"/>
</dbReference>
<dbReference type="GO" id="GO:0000977">
    <property type="term" value="F:RNA polymerase II transcription regulatory region sequence-specific DNA binding"/>
    <property type="evidence" value="ECO:0007669"/>
    <property type="project" value="InterPro"/>
</dbReference>
<dbReference type="GO" id="GO:0030154">
    <property type="term" value="P:cell differentiation"/>
    <property type="evidence" value="ECO:0007669"/>
    <property type="project" value="UniProtKB-KW"/>
</dbReference>
<dbReference type="GO" id="GO:0009908">
    <property type="term" value="P:flower development"/>
    <property type="evidence" value="ECO:0007669"/>
    <property type="project" value="UniProtKB-KW"/>
</dbReference>
<dbReference type="GO" id="GO:0045944">
    <property type="term" value="P:positive regulation of transcription by RNA polymerase II"/>
    <property type="evidence" value="ECO:0007669"/>
    <property type="project" value="InterPro"/>
</dbReference>
<dbReference type="CDD" id="cd00265">
    <property type="entry name" value="MADS_MEF2_like"/>
    <property type="match status" value="1"/>
</dbReference>
<dbReference type="FunFam" id="3.40.1810.10:FF:000003">
    <property type="entry name" value="MADS-box transcription factor MADS-MC"/>
    <property type="match status" value="1"/>
</dbReference>
<dbReference type="Gene3D" id="3.40.1810.10">
    <property type="entry name" value="Transcription factor, MADS-box"/>
    <property type="match status" value="1"/>
</dbReference>
<dbReference type="InterPro" id="IPR050142">
    <property type="entry name" value="MADS-box/MEF2_TF"/>
</dbReference>
<dbReference type="InterPro" id="IPR033896">
    <property type="entry name" value="MEF2-like_N"/>
</dbReference>
<dbReference type="InterPro" id="IPR002487">
    <property type="entry name" value="TF_Kbox"/>
</dbReference>
<dbReference type="InterPro" id="IPR002100">
    <property type="entry name" value="TF_MADSbox"/>
</dbReference>
<dbReference type="InterPro" id="IPR036879">
    <property type="entry name" value="TF_MADSbox_sf"/>
</dbReference>
<dbReference type="PANTHER" id="PTHR48019">
    <property type="entry name" value="SERUM RESPONSE FACTOR HOMOLOG"/>
    <property type="match status" value="1"/>
</dbReference>
<dbReference type="Pfam" id="PF01486">
    <property type="entry name" value="K-box"/>
    <property type="match status" value="1"/>
</dbReference>
<dbReference type="Pfam" id="PF00319">
    <property type="entry name" value="SRF-TF"/>
    <property type="match status" value="1"/>
</dbReference>
<dbReference type="PRINTS" id="PR00404">
    <property type="entry name" value="MADSDOMAIN"/>
</dbReference>
<dbReference type="SMART" id="SM00432">
    <property type="entry name" value="MADS"/>
    <property type="match status" value="1"/>
</dbReference>
<dbReference type="SUPFAM" id="SSF55455">
    <property type="entry name" value="SRF-like"/>
    <property type="match status" value="1"/>
</dbReference>
<dbReference type="PROSITE" id="PS51297">
    <property type="entry name" value="K_BOX"/>
    <property type="match status" value="1"/>
</dbReference>
<dbReference type="PROSITE" id="PS00350">
    <property type="entry name" value="MADS_BOX_1"/>
    <property type="match status" value="1"/>
</dbReference>
<dbReference type="PROSITE" id="PS50066">
    <property type="entry name" value="MADS_BOX_2"/>
    <property type="match status" value="1"/>
</dbReference>
<organism>
    <name type="scientific">Brassica oleracea var. botrytis</name>
    <name type="common">Cauliflower</name>
    <dbReference type="NCBI Taxonomy" id="3715"/>
    <lineage>
        <taxon>Eukaryota</taxon>
        <taxon>Viridiplantae</taxon>
        <taxon>Streptophyta</taxon>
        <taxon>Embryophyta</taxon>
        <taxon>Tracheophyta</taxon>
        <taxon>Spermatophyta</taxon>
        <taxon>Magnoliopsida</taxon>
        <taxon>eudicotyledons</taxon>
        <taxon>Gunneridae</taxon>
        <taxon>Pentapetalae</taxon>
        <taxon>rosids</taxon>
        <taxon>malvids</taxon>
        <taxon>Brassicales</taxon>
        <taxon>Brassicaceae</taxon>
        <taxon>Brassiceae</taxon>
        <taxon>Brassica</taxon>
    </lineage>
</organism>
<name>AP1A_BRAOB</name>
<keyword id="KW-0010">Activator</keyword>
<keyword id="KW-0175">Coiled coil</keyword>
<keyword id="KW-0217">Developmental protein</keyword>
<keyword id="KW-0221">Differentiation</keyword>
<keyword id="KW-0238">DNA-binding</keyword>
<keyword id="KW-0287">Flowering</keyword>
<keyword id="KW-0539">Nucleus</keyword>
<keyword id="KW-0804">Transcription</keyword>
<keyword id="KW-0805">Transcription regulation</keyword>
<evidence type="ECO:0000250" key="1"/>
<evidence type="ECO:0000255" key="2">
    <source>
        <dbReference type="PROSITE-ProRule" id="PRU00251"/>
    </source>
</evidence>
<evidence type="ECO:0000255" key="3">
    <source>
        <dbReference type="PROSITE-ProRule" id="PRU00629"/>
    </source>
</evidence>
<evidence type="ECO:0000256" key="4">
    <source>
        <dbReference type="SAM" id="MobiDB-lite"/>
    </source>
</evidence>
<evidence type="ECO:0000269" key="5">
    <source>
    </source>
</evidence>
<accession>Q8GTF5</accession>
<gene>
    <name type="primary">AP1A</name>
</gene>